<organism>
    <name type="scientific">Arabidopsis thaliana</name>
    <name type="common">Mouse-ear cress</name>
    <dbReference type="NCBI Taxonomy" id="3702"/>
    <lineage>
        <taxon>Eukaryota</taxon>
        <taxon>Viridiplantae</taxon>
        <taxon>Streptophyta</taxon>
        <taxon>Embryophyta</taxon>
        <taxon>Tracheophyta</taxon>
        <taxon>Spermatophyta</taxon>
        <taxon>Magnoliopsida</taxon>
        <taxon>eudicotyledons</taxon>
        <taxon>Gunneridae</taxon>
        <taxon>Pentapetalae</taxon>
        <taxon>rosids</taxon>
        <taxon>malvids</taxon>
        <taxon>Brassicales</taxon>
        <taxon>Brassicaceae</taxon>
        <taxon>Camelineae</taxon>
        <taxon>Arabidopsis</taxon>
    </lineage>
</organism>
<reference key="1">
    <citation type="journal article" date="2000" name="Nature">
        <title>Sequence and analysis of chromosome 1 of the plant Arabidopsis thaliana.</title>
        <authorList>
            <person name="Theologis A."/>
            <person name="Ecker J.R."/>
            <person name="Palm C.J."/>
            <person name="Federspiel N.A."/>
            <person name="Kaul S."/>
            <person name="White O."/>
            <person name="Alonso J."/>
            <person name="Altafi H."/>
            <person name="Araujo R."/>
            <person name="Bowman C.L."/>
            <person name="Brooks S.Y."/>
            <person name="Buehler E."/>
            <person name="Chan A."/>
            <person name="Chao Q."/>
            <person name="Chen H."/>
            <person name="Cheuk R.F."/>
            <person name="Chin C.W."/>
            <person name="Chung M.K."/>
            <person name="Conn L."/>
            <person name="Conway A.B."/>
            <person name="Conway A.R."/>
            <person name="Creasy T.H."/>
            <person name="Dewar K."/>
            <person name="Dunn P."/>
            <person name="Etgu P."/>
            <person name="Feldblyum T.V."/>
            <person name="Feng J.-D."/>
            <person name="Fong B."/>
            <person name="Fujii C.Y."/>
            <person name="Gill J.E."/>
            <person name="Goldsmith A.D."/>
            <person name="Haas B."/>
            <person name="Hansen N.F."/>
            <person name="Hughes B."/>
            <person name="Huizar L."/>
            <person name="Hunter J.L."/>
            <person name="Jenkins J."/>
            <person name="Johnson-Hopson C."/>
            <person name="Khan S."/>
            <person name="Khaykin E."/>
            <person name="Kim C.J."/>
            <person name="Koo H.L."/>
            <person name="Kremenetskaia I."/>
            <person name="Kurtz D.B."/>
            <person name="Kwan A."/>
            <person name="Lam B."/>
            <person name="Langin-Hooper S."/>
            <person name="Lee A."/>
            <person name="Lee J.M."/>
            <person name="Lenz C.A."/>
            <person name="Li J.H."/>
            <person name="Li Y.-P."/>
            <person name="Lin X."/>
            <person name="Liu S.X."/>
            <person name="Liu Z.A."/>
            <person name="Luros J.S."/>
            <person name="Maiti R."/>
            <person name="Marziali A."/>
            <person name="Militscher J."/>
            <person name="Miranda M."/>
            <person name="Nguyen M."/>
            <person name="Nierman W.C."/>
            <person name="Osborne B.I."/>
            <person name="Pai G."/>
            <person name="Peterson J."/>
            <person name="Pham P.K."/>
            <person name="Rizzo M."/>
            <person name="Rooney T."/>
            <person name="Rowley D."/>
            <person name="Sakano H."/>
            <person name="Salzberg S.L."/>
            <person name="Schwartz J.R."/>
            <person name="Shinn P."/>
            <person name="Southwick A.M."/>
            <person name="Sun H."/>
            <person name="Tallon L.J."/>
            <person name="Tambunga G."/>
            <person name="Toriumi M.J."/>
            <person name="Town C.D."/>
            <person name="Utterback T."/>
            <person name="Van Aken S."/>
            <person name="Vaysberg M."/>
            <person name="Vysotskaia V.S."/>
            <person name="Walker M."/>
            <person name="Wu D."/>
            <person name="Yu G."/>
            <person name="Fraser C.M."/>
            <person name="Venter J.C."/>
            <person name="Davis R.W."/>
        </authorList>
    </citation>
    <scope>NUCLEOTIDE SEQUENCE [LARGE SCALE GENOMIC DNA]</scope>
    <source>
        <strain>cv. Columbia</strain>
    </source>
</reference>
<reference key="2">
    <citation type="journal article" date="2017" name="Plant J.">
        <title>Araport11: a complete reannotation of the Arabidopsis thaliana reference genome.</title>
        <authorList>
            <person name="Cheng C.Y."/>
            <person name="Krishnakumar V."/>
            <person name="Chan A.P."/>
            <person name="Thibaud-Nissen F."/>
            <person name="Schobel S."/>
            <person name="Town C.D."/>
        </authorList>
    </citation>
    <scope>GENOME REANNOTATION</scope>
    <source>
        <strain>cv. Columbia</strain>
    </source>
</reference>
<reference key="3">
    <citation type="journal article" date="2003" name="Science">
        <title>Empirical analysis of transcriptional activity in the Arabidopsis genome.</title>
        <authorList>
            <person name="Yamada K."/>
            <person name="Lim J."/>
            <person name="Dale J.M."/>
            <person name="Chen H."/>
            <person name="Shinn P."/>
            <person name="Palm C.J."/>
            <person name="Southwick A.M."/>
            <person name="Wu H.C."/>
            <person name="Kim C.J."/>
            <person name="Nguyen M."/>
            <person name="Pham P.K."/>
            <person name="Cheuk R.F."/>
            <person name="Karlin-Newmann G."/>
            <person name="Liu S.X."/>
            <person name="Lam B."/>
            <person name="Sakano H."/>
            <person name="Wu T."/>
            <person name="Yu G."/>
            <person name="Miranda M."/>
            <person name="Quach H.L."/>
            <person name="Tripp M."/>
            <person name="Chang C.H."/>
            <person name="Lee J.M."/>
            <person name="Toriumi M.J."/>
            <person name="Chan M.M."/>
            <person name="Tang C.C."/>
            <person name="Onodera C.S."/>
            <person name="Deng J.M."/>
            <person name="Akiyama K."/>
            <person name="Ansari Y."/>
            <person name="Arakawa T."/>
            <person name="Banh J."/>
            <person name="Banno F."/>
            <person name="Bowser L."/>
            <person name="Brooks S.Y."/>
            <person name="Carninci P."/>
            <person name="Chao Q."/>
            <person name="Choy N."/>
            <person name="Enju A."/>
            <person name="Goldsmith A.D."/>
            <person name="Gurjal M."/>
            <person name="Hansen N.F."/>
            <person name="Hayashizaki Y."/>
            <person name="Johnson-Hopson C."/>
            <person name="Hsuan V.W."/>
            <person name="Iida K."/>
            <person name="Karnes M."/>
            <person name="Khan S."/>
            <person name="Koesema E."/>
            <person name="Ishida J."/>
            <person name="Jiang P.X."/>
            <person name="Jones T."/>
            <person name="Kawai J."/>
            <person name="Kamiya A."/>
            <person name="Meyers C."/>
            <person name="Nakajima M."/>
            <person name="Narusaka M."/>
            <person name="Seki M."/>
            <person name="Sakurai T."/>
            <person name="Satou M."/>
            <person name="Tamse R."/>
            <person name="Vaysberg M."/>
            <person name="Wallender E.K."/>
            <person name="Wong C."/>
            <person name="Yamamura Y."/>
            <person name="Yuan S."/>
            <person name="Shinozaki K."/>
            <person name="Davis R.W."/>
            <person name="Theologis A."/>
            <person name="Ecker J.R."/>
        </authorList>
    </citation>
    <scope>NUCLEOTIDE SEQUENCE [LARGE SCALE MRNA] (ISOFORM 1)</scope>
    <source>
        <strain>cv. Columbia</strain>
    </source>
</reference>
<reference key="4">
    <citation type="journal article" date="2009" name="DNA Res.">
        <title>Analysis of multiple occurrences of alternative splicing events in Arabidopsis thaliana using novel sequenced full-length cDNAs.</title>
        <authorList>
            <person name="Iida K."/>
            <person name="Fukami-Kobayashi K."/>
            <person name="Toyoda A."/>
            <person name="Sakaki Y."/>
            <person name="Kobayashi M."/>
            <person name="Seki M."/>
            <person name="Shinozaki K."/>
        </authorList>
    </citation>
    <scope>NUCLEOTIDE SEQUENCE [LARGE SCALE MRNA] (ISOFORM 3)</scope>
    <source>
        <strain>cv. Columbia</strain>
        <tissue>Rosette leaf</tissue>
    </source>
</reference>
<reference key="5">
    <citation type="journal article" date="2006" name="Plant Cell">
        <title>Arabidopsis NRP1 and NRP2 encode histone chaperones and are required for maintaining postembryonic root growth.</title>
        <authorList>
            <person name="Zhu Y."/>
            <person name="Dong A."/>
            <person name="Meyer D."/>
            <person name="Pichon O."/>
            <person name="Renou J.P."/>
            <person name="Cao K."/>
            <person name="Shen W.H."/>
        </authorList>
    </citation>
    <scope>DISRUPTION PHENOTYPE</scope>
    <scope>FUNCTION</scope>
    <scope>TISSUE SPECIFICITY</scope>
    <scope>SUBCELLULAR LOCATION</scope>
    <scope>SUBUNIT</scope>
</reference>
<reference key="6">
    <citation type="journal article" date="2007" name="Plant Signal. Behav.">
        <title>Chromatin remodeling in Arabidopsis root growth.</title>
        <authorList>
            <person name="Zhu Y."/>
            <person name="Dong A."/>
            <person name="Shen W.H."/>
        </authorList>
    </citation>
    <scope>FUNCTION</scope>
</reference>
<reference key="7">
    <citation type="journal article" date="2009" name="Plant J.">
        <title>Molecular and reverse genetic characterization of NUCLEOSOME ASSEMBLY PROTEIN1 (NAP1) genes unravels their function in transcription and nucleotide excision repair in Arabidopsis thaliana.</title>
        <authorList>
            <person name="Liu Z."/>
            <person name="Zhu Y."/>
            <person name="Gao J."/>
            <person name="Yu F."/>
            <person name="Dong A."/>
            <person name="Shen W.H."/>
        </authorList>
    </citation>
    <scope>INTERACTION WITH HISTONE H2A</scope>
</reference>
<reference key="8">
    <citation type="journal article" date="2012" name="Plant Cell">
        <title>NAP1 family histone chaperones are required for somatic homologous recombination in Arabidopsis.</title>
        <authorList>
            <person name="Gao J."/>
            <person name="Zhu Y."/>
            <person name="Zhou W."/>
            <person name="Molinier J."/>
            <person name="Dong A."/>
            <person name="Shen W.H."/>
        </authorList>
    </citation>
    <scope>DISRUPTION PHENOTYPE</scope>
    <scope>FUNCTION</scope>
</reference>
<evidence type="ECO:0000255" key="1"/>
<evidence type="ECO:0000256" key="2">
    <source>
        <dbReference type="SAM" id="MobiDB-lite"/>
    </source>
</evidence>
<evidence type="ECO:0000269" key="3">
    <source>
    </source>
</evidence>
<evidence type="ECO:0000269" key="4">
    <source>
    </source>
</evidence>
<evidence type="ECO:0000269" key="5">
    <source>
    </source>
</evidence>
<evidence type="ECO:0000303" key="6">
    <source>
    </source>
</evidence>
<evidence type="ECO:0000305" key="7"/>
<evidence type="ECO:0000305" key="8">
    <source>
    </source>
</evidence>
<evidence type="ECO:0000305" key="9">
    <source>
    </source>
</evidence>
<evidence type="ECO:0007829" key="10">
    <source>
        <dbReference type="PDB" id="5DAY"/>
    </source>
</evidence>
<evidence type="ECO:0007829" key="11">
    <source>
        <dbReference type="PDB" id="7BP6"/>
    </source>
</evidence>
<dbReference type="EMBL" id="AC011765">
    <property type="protein sequence ID" value="AAG52377.1"/>
    <property type="molecule type" value="Genomic_DNA"/>
</dbReference>
<dbReference type="EMBL" id="CP002684">
    <property type="protein sequence ID" value="AEE35609.1"/>
    <property type="molecule type" value="Genomic_DNA"/>
</dbReference>
<dbReference type="EMBL" id="CP002684">
    <property type="protein sequence ID" value="AEE35611.1"/>
    <property type="molecule type" value="Genomic_DNA"/>
</dbReference>
<dbReference type="EMBL" id="AF385720">
    <property type="protein sequence ID" value="AAK60311.1"/>
    <property type="molecule type" value="mRNA"/>
</dbReference>
<dbReference type="EMBL" id="AY081733">
    <property type="protein sequence ID" value="AAL87386.1"/>
    <property type="molecule type" value="mRNA"/>
</dbReference>
<dbReference type="EMBL" id="AK316717">
    <property type="protein sequence ID" value="BAH19444.1"/>
    <property type="molecule type" value="mRNA"/>
</dbReference>
<dbReference type="PIR" id="G96774">
    <property type="entry name" value="G96774"/>
</dbReference>
<dbReference type="RefSeq" id="NP_001077822.1">
    <molecule id="Q9CA59-3"/>
    <property type="nucleotide sequence ID" value="NM_001084353.1"/>
</dbReference>
<dbReference type="RefSeq" id="NP_177596.1">
    <molecule id="Q9CA59-1"/>
    <property type="nucleotide sequence ID" value="NM_106116.4"/>
</dbReference>
<dbReference type="PDB" id="5DAY">
    <property type="method" value="X-ray"/>
    <property type="resolution" value="2.33 A"/>
    <property type="chains" value="A/B=19-225"/>
</dbReference>
<dbReference type="PDB" id="7BP6">
    <property type="method" value="X-ray"/>
    <property type="resolution" value="1.58 A"/>
    <property type="chains" value="A=226-232"/>
</dbReference>
<dbReference type="PDB" id="7C7X">
    <property type="method" value="X-ray"/>
    <property type="resolution" value="3.00 A"/>
    <property type="chains" value="E/F=19-256"/>
</dbReference>
<dbReference type="PDBsum" id="5DAY"/>
<dbReference type="PDBsum" id="7BP6"/>
<dbReference type="PDBsum" id="7C7X"/>
<dbReference type="SMR" id="Q9CA59"/>
<dbReference type="BioGRID" id="29016">
    <property type="interactions" value="8"/>
</dbReference>
<dbReference type="FunCoup" id="Q9CA59">
    <property type="interactions" value="4216"/>
</dbReference>
<dbReference type="IntAct" id="Q9CA59">
    <property type="interactions" value="2"/>
</dbReference>
<dbReference type="STRING" id="3702.Q9CA59"/>
<dbReference type="PaxDb" id="3702-AT1G74560.3"/>
<dbReference type="ProteomicsDB" id="249452">
    <molecule id="Q9CA59-1"/>
</dbReference>
<dbReference type="EnsemblPlants" id="AT1G74560.1">
    <molecule id="Q9CA59-1"/>
    <property type="protein sequence ID" value="AT1G74560.1"/>
    <property type="gene ID" value="AT1G74560"/>
</dbReference>
<dbReference type="EnsemblPlants" id="AT1G74560.3">
    <molecule id="Q9CA59-3"/>
    <property type="protein sequence ID" value="AT1G74560.3"/>
    <property type="gene ID" value="AT1G74560"/>
</dbReference>
<dbReference type="GeneID" id="843797"/>
<dbReference type="Gramene" id="AT1G74560.1">
    <molecule id="Q9CA59-1"/>
    <property type="protein sequence ID" value="AT1G74560.1"/>
    <property type="gene ID" value="AT1G74560"/>
</dbReference>
<dbReference type="Gramene" id="AT1G74560.3">
    <molecule id="Q9CA59-3"/>
    <property type="protein sequence ID" value="AT1G74560.3"/>
    <property type="gene ID" value="AT1G74560"/>
</dbReference>
<dbReference type="KEGG" id="ath:AT1G74560"/>
<dbReference type="Araport" id="AT1G74560"/>
<dbReference type="TAIR" id="AT1G74560">
    <property type="gene designation" value="NRP1"/>
</dbReference>
<dbReference type="eggNOG" id="KOG1508">
    <property type="taxonomic scope" value="Eukaryota"/>
</dbReference>
<dbReference type="InParanoid" id="Q9CA59"/>
<dbReference type="OMA" id="VCHDNEK"/>
<dbReference type="PhylomeDB" id="Q9CA59"/>
<dbReference type="CD-CODE" id="4299E36E">
    <property type="entry name" value="Nucleolus"/>
</dbReference>
<dbReference type="PRO" id="PR:Q9CA59"/>
<dbReference type="Proteomes" id="UP000006548">
    <property type="component" value="Chromosome 1"/>
</dbReference>
<dbReference type="ExpressionAtlas" id="Q9CA59">
    <property type="expression patterns" value="baseline and differential"/>
</dbReference>
<dbReference type="GO" id="GO:0005737">
    <property type="term" value="C:cytoplasm"/>
    <property type="evidence" value="ECO:0000314"/>
    <property type="project" value="TAIR"/>
</dbReference>
<dbReference type="GO" id="GO:0005634">
    <property type="term" value="C:nucleus"/>
    <property type="evidence" value="ECO:0000314"/>
    <property type="project" value="TAIR"/>
</dbReference>
<dbReference type="GO" id="GO:0003682">
    <property type="term" value="F:chromatin binding"/>
    <property type="evidence" value="ECO:0000314"/>
    <property type="project" value="TAIR"/>
</dbReference>
<dbReference type="GO" id="GO:0042393">
    <property type="term" value="F:histone binding"/>
    <property type="evidence" value="ECO:0000314"/>
    <property type="project" value="UniProtKB"/>
</dbReference>
<dbReference type="GO" id="GO:0000724">
    <property type="term" value="P:double-strand break repair via homologous recombination"/>
    <property type="evidence" value="ECO:0000316"/>
    <property type="project" value="TAIR"/>
</dbReference>
<dbReference type="GO" id="GO:0006334">
    <property type="term" value="P:nucleosome assembly"/>
    <property type="evidence" value="ECO:0007669"/>
    <property type="project" value="InterPro"/>
</dbReference>
<dbReference type="GO" id="GO:0016444">
    <property type="term" value="P:somatic cell DNA recombination"/>
    <property type="evidence" value="ECO:0000315"/>
    <property type="project" value="UniProtKB"/>
</dbReference>
<dbReference type="FunFam" id="3.30.1120.90:FF:000007">
    <property type="entry name" value="NAP1-related protein 1"/>
    <property type="match status" value="1"/>
</dbReference>
<dbReference type="FunFam" id="1.20.5.1500:FF:000003">
    <property type="entry name" value="SET isoform 2"/>
    <property type="match status" value="1"/>
</dbReference>
<dbReference type="Gene3D" id="1.20.5.1500">
    <property type="match status" value="1"/>
</dbReference>
<dbReference type="Gene3D" id="3.30.1120.90">
    <property type="entry name" value="Nucleosome assembly protein"/>
    <property type="match status" value="1"/>
</dbReference>
<dbReference type="InterPro" id="IPR037231">
    <property type="entry name" value="NAP-like_sf"/>
</dbReference>
<dbReference type="InterPro" id="IPR002164">
    <property type="entry name" value="NAP_family"/>
</dbReference>
<dbReference type="PANTHER" id="PTHR11875">
    <property type="entry name" value="TESTIS-SPECIFIC Y-ENCODED PROTEIN"/>
    <property type="match status" value="1"/>
</dbReference>
<dbReference type="Pfam" id="PF00956">
    <property type="entry name" value="NAP"/>
    <property type="match status" value="1"/>
</dbReference>
<dbReference type="SUPFAM" id="SSF143113">
    <property type="entry name" value="NAP-like"/>
    <property type="match status" value="1"/>
</dbReference>
<gene>
    <name type="primary">NRP1</name>
    <name type="synonym">NFA6</name>
    <name type="ordered locus">At1g74560</name>
    <name type="ORF">F1M20.24</name>
</gene>
<comment type="function">
    <text evidence="3 4 5">Acts as a histone H2A/H2B chaperone in nucleosome assembly, playing a critical role for the correct expression of genes involved in root proliferation and patterning. Required with NRP2 for the maintenance of cell proliferation and differentiation in postembryonic root growth. Involved in both intramolecular and intermolecular somatic homologous recombination.</text>
</comment>
<comment type="subunit">
    <text evidence="3">Can form homomeric and heteromeric protein complexes with NRP2. Binds histones H2A and H2B and associates with chromatin in vivo.</text>
</comment>
<comment type="subcellular location">
    <subcellularLocation>
        <location evidence="3">Cytoplasm</location>
    </subcellularLocation>
    <subcellularLocation>
        <location evidence="3">Nucleus</location>
    </subcellularLocation>
</comment>
<comment type="alternative products">
    <event type="alternative splicing"/>
    <isoform>
        <id>Q9CA59-1</id>
        <name>1</name>
        <sequence type="displayed"/>
    </isoform>
    <isoform>
        <id>Q9CA59-3</id>
        <name>3</name>
        <sequence type="described" ref="VSP_053257"/>
    </isoform>
</comment>
<comment type="tissue specificity">
    <text evidence="3">Ubiquitous.</text>
</comment>
<comment type="domain">
    <text>The acidic domain is probably involved in the interaction with histones.</text>
</comment>
<comment type="disruption phenotype">
    <text evidence="3 5">No visible phenotype.</text>
</comment>
<comment type="miscellaneous">
    <text evidence="8 9">Double mutant nrp1-nrp2 shows arrest of cell cycle progression at G2/M and disordered cellular organization occurred in root tips resulting in a short-root phenotype (PubMed:17122067). Double mutant nrp1-nrp2 also displays hypersensitive response to DNA damage (PubMed:17122067) and impaired somatic homologous recombination (PubMed:22534127).</text>
</comment>
<comment type="similarity">
    <text evidence="7">Belongs to the nucleosome assembly protein (NAP) family.</text>
</comment>
<name>NRP1_ARATH</name>
<feature type="chain" id="PRO_0000423702" description="NAP1-related protein 1">
    <location>
        <begin position="1"/>
        <end position="256"/>
    </location>
</feature>
<feature type="region of interest" description="Disordered" evidence="2">
    <location>
        <begin position="220"/>
        <end position="256"/>
    </location>
</feature>
<feature type="coiled-coil region" evidence="1">
    <location>
        <begin position="23"/>
        <end position="64"/>
    </location>
</feature>
<feature type="compositionally biased region" description="Acidic residues" evidence="2">
    <location>
        <begin position="226"/>
        <end position="256"/>
    </location>
</feature>
<feature type="splice variant" id="VSP_053257" description="In isoform 3." evidence="6">
    <original>SNPLTYFNNDADEEDFDGDDDGDEEGEEDDDDEEEEDGEE</original>
    <variation>MLMKRILMEMMMVTKREKKTMTMKRRKMVRNDGSPKITHCWLASITDV</variation>
    <location>
        <begin position="217"/>
        <end position="256"/>
    </location>
</feature>
<feature type="helix" evidence="10">
    <location>
        <begin position="19"/>
        <end position="74"/>
    </location>
</feature>
<feature type="helix" evidence="10">
    <location>
        <begin position="80"/>
        <end position="87"/>
    </location>
</feature>
<feature type="helix" evidence="10">
    <location>
        <begin position="89"/>
        <end position="92"/>
    </location>
</feature>
<feature type="helix" evidence="10">
    <location>
        <begin position="97"/>
        <end position="103"/>
    </location>
</feature>
<feature type="strand" evidence="10">
    <location>
        <begin position="106"/>
        <end position="113"/>
    </location>
</feature>
<feature type="strand" evidence="10">
    <location>
        <begin position="120"/>
        <end position="127"/>
    </location>
</feature>
<feature type="strand" evidence="10">
    <location>
        <begin position="131"/>
        <end position="134"/>
    </location>
</feature>
<feature type="strand" evidence="10">
    <location>
        <begin position="136"/>
        <end position="143"/>
    </location>
</feature>
<feature type="strand" evidence="10">
    <location>
        <begin position="151"/>
        <end position="154"/>
    </location>
</feature>
<feature type="helix" evidence="10">
    <location>
        <begin position="186"/>
        <end position="189"/>
    </location>
</feature>
<feature type="helix" evidence="10">
    <location>
        <begin position="206"/>
        <end position="213"/>
    </location>
</feature>
<feature type="turn" evidence="10">
    <location>
        <begin position="214"/>
        <end position="217"/>
    </location>
</feature>
<feature type="helix" evidence="10">
    <location>
        <begin position="220"/>
        <end position="223"/>
    </location>
</feature>
<feature type="helix" evidence="11">
    <location>
        <begin position="227"/>
        <end position="229"/>
    </location>
</feature>
<protein>
    <recommendedName>
        <fullName>NAP1-related protein 1</fullName>
    </recommendedName>
    <alternativeName>
        <fullName>Nucleosome/chromatin assembly factor group A6</fullName>
    </alternativeName>
    <alternativeName>
        <fullName>Protein SET homolog 1</fullName>
    </alternativeName>
</protein>
<accession>Q9CA59</accession>
<accession>A8MSD9</accession>
<accession>F4HVQ1</accession>
<proteinExistence type="evidence at protein level"/>
<keyword id="KW-0002">3D-structure</keyword>
<keyword id="KW-0025">Alternative splicing</keyword>
<keyword id="KW-0143">Chaperone</keyword>
<keyword id="KW-0175">Coiled coil</keyword>
<keyword id="KW-0963">Cytoplasm</keyword>
<keyword id="KW-0539">Nucleus</keyword>
<keyword id="KW-1185">Reference proteome</keyword>
<sequence>MVADKSKKSKIEEKGEEENLEQIDAELVLSIEKLQEIQDDLEKINEKASDEVLEVEQKYNVIRKPVYDKRNEVIQSIPGFWMTAFLSHPALGDLLTEEDQKIFKYLNSLEVEDAKDVKSGYSITFHFTSNPFFEDAKLTKTFTFLEEGTTKITATPIKWKEGKGLPNGVNHDDKKGNKRALPEESFFTWFTDAQHKEDAGDEIHDEVADIIKEDLWSNPLTYFNNDADEEDFDGDDDGDEEGEEDDDDEEEEDGEE</sequence>